<gene>
    <name evidence="1" type="primary">rplB</name>
    <name type="ordered locus">Mrad2831_2221</name>
</gene>
<organism>
    <name type="scientific">Methylobacterium radiotolerans (strain ATCC 27329 / DSM 1819 / JCM 2831 / NBRC 15690 / NCIMB 10815 / 0-1)</name>
    <dbReference type="NCBI Taxonomy" id="426355"/>
    <lineage>
        <taxon>Bacteria</taxon>
        <taxon>Pseudomonadati</taxon>
        <taxon>Pseudomonadota</taxon>
        <taxon>Alphaproteobacteria</taxon>
        <taxon>Hyphomicrobiales</taxon>
        <taxon>Methylobacteriaceae</taxon>
        <taxon>Methylobacterium</taxon>
    </lineage>
</organism>
<proteinExistence type="inferred from homology"/>
<keyword id="KW-0687">Ribonucleoprotein</keyword>
<keyword id="KW-0689">Ribosomal protein</keyword>
<keyword id="KW-0694">RNA-binding</keyword>
<keyword id="KW-0699">rRNA-binding</keyword>
<protein>
    <recommendedName>
        <fullName evidence="1">Large ribosomal subunit protein uL2</fullName>
    </recommendedName>
    <alternativeName>
        <fullName evidence="3">50S ribosomal protein L2</fullName>
    </alternativeName>
</protein>
<name>RL2_METRJ</name>
<reference key="1">
    <citation type="submission" date="2008-03" db="EMBL/GenBank/DDBJ databases">
        <title>Complete sequence of chromosome of Methylobacterium radiotolerans JCM 2831.</title>
        <authorList>
            <consortium name="US DOE Joint Genome Institute"/>
            <person name="Copeland A."/>
            <person name="Lucas S."/>
            <person name="Lapidus A."/>
            <person name="Glavina del Rio T."/>
            <person name="Dalin E."/>
            <person name="Tice H."/>
            <person name="Bruce D."/>
            <person name="Goodwin L."/>
            <person name="Pitluck S."/>
            <person name="Kiss H."/>
            <person name="Brettin T."/>
            <person name="Detter J.C."/>
            <person name="Han C."/>
            <person name="Kuske C.R."/>
            <person name="Schmutz J."/>
            <person name="Larimer F."/>
            <person name="Land M."/>
            <person name="Hauser L."/>
            <person name="Kyrpides N."/>
            <person name="Mikhailova N."/>
            <person name="Marx C.J."/>
            <person name="Richardson P."/>
        </authorList>
    </citation>
    <scope>NUCLEOTIDE SEQUENCE [LARGE SCALE GENOMIC DNA]</scope>
    <source>
        <strain>ATCC 27329 / DSM 1819 / JCM 2831 / NBRC 15690 / NCIMB 10815 / 0-1</strain>
    </source>
</reference>
<feature type="chain" id="PRO_1000141580" description="Large ribosomal subunit protein uL2">
    <location>
        <begin position="1"/>
        <end position="278"/>
    </location>
</feature>
<feature type="region of interest" description="Disordered" evidence="2">
    <location>
        <begin position="222"/>
        <end position="264"/>
    </location>
</feature>
<accession>B1LWS9</accession>
<dbReference type="EMBL" id="CP001001">
    <property type="protein sequence ID" value="ACB24216.1"/>
    <property type="molecule type" value="Genomic_DNA"/>
</dbReference>
<dbReference type="RefSeq" id="WP_012319189.1">
    <property type="nucleotide sequence ID" value="NC_010505.1"/>
</dbReference>
<dbReference type="SMR" id="B1LWS9"/>
<dbReference type="STRING" id="426355.Mrad2831_2221"/>
<dbReference type="GeneID" id="6138253"/>
<dbReference type="KEGG" id="mrd:Mrad2831_2221"/>
<dbReference type="eggNOG" id="COG0090">
    <property type="taxonomic scope" value="Bacteria"/>
</dbReference>
<dbReference type="HOGENOM" id="CLU_036235_2_1_5"/>
<dbReference type="OrthoDB" id="9778722at2"/>
<dbReference type="Proteomes" id="UP000006589">
    <property type="component" value="Chromosome"/>
</dbReference>
<dbReference type="GO" id="GO:0015934">
    <property type="term" value="C:large ribosomal subunit"/>
    <property type="evidence" value="ECO:0007669"/>
    <property type="project" value="InterPro"/>
</dbReference>
<dbReference type="GO" id="GO:0019843">
    <property type="term" value="F:rRNA binding"/>
    <property type="evidence" value="ECO:0007669"/>
    <property type="project" value="UniProtKB-UniRule"/>
</dbReference>
<dbReference type="GO" id="GO:0003735">
    <property type="term" value="F:structural constituent of ribosome"/>
    <property type="evidence" value="ECO:0007669"/>
    <property type="project" value="InterPro"/>
</dbReference>
<dbReference type="GO" id="GO:0016740">
    <property type="term" value="F:transferase activity"/>
    <property type="evidence" value="ECO:0007669"/>
    <property type="project" value="InterPro"/>
</dbReference>
<dbReference type="GO" id="GO:0002181">
    <property type="term" value="P:cytoplasmic translation"/>
    <property type="evidence" value="ECO:0007669"/>
    <property type="project" value="TreeGrafter"/>
</dbReference>
<dbReference type="FunFam" id="2.30.30.30:FF:000001">
    <property type="entry name" value="50S ribosomal protein L2"/>
    <property type="match status" value="1"/>
</dbReference>
<dbReference type="FunFam" id="4.10.950.10:FF:000001">
    <property type="entry name" value="50S ribosomal protein L2"/>
    <property type="match status" value="1"/>
</dbReference>
<dbReference type="Gene3D" id="2.30.30.30">
    <property type="match status" value="1"/>
</dbReference>
<dbReference type="Gene3D" id="2.40.50.140">
    <property type="entry name" value="Nucleic acid-binding proteins"/>
    <property type="match status" value="1"/>
</dbReference>
<dbReference type="Gene3D" id="4.10.950.10">
    <property type="entry name" value="Ribosomal protein L2, domain 3"/>
    <property type="match status" value="1"/>
</dbReference>
<dbReference type="HAMAP" id="MF_01320_B">
    <property type="entry name" value="Ribosomal_uL2_B"/>
    <property type="match status" value="1"/>
</dbReference>
<dbReference type="InterPro" id="IPR012340">
    <property type="entry name" value="NA-bd_OB-fold"/>
</dbReference>
<dbReference type="InterPro" id="IPR014722">
    <property type="entry name" value="Rib_uL2_dom2"/>
</dbReference>
<dbReference type="InterPro" id="IPR002171">
    <property type="entry name" value="Ribosomal_uL2"/>
</dbReference>
<dbReference type="InterPro" id="IPR005880">
    <property type="entry name" value="Ribosomal_uL2_bac/org-type"/>
</dbReference>
<dbReference type="InterPro" id="IPR022669">
    <property type="entry name" value="Ribosomal_uL2_C"/>
</dbReference>
<dbReference type="InterPro" id="IPR022671">
    <property type="entry name" value="Ribosomal_uL2_CS"/>
</dbReference>
<dbReference type="InterPro" id="IPR014726">
    <property type="entry name" value="Ribosomal_uL2_dom3"/>
</dbReference>
<dbReference type="InterPro" id="IPR022666">
    <property type="entry name" value="Ribosomal_uL2_RNA-bd_dom"/>
</dbReference>
<dbReference type="InterPro" id="IPR008991">
    <property type="entry name" value="Translation_prot_SH3-like_sf"/>
</dbReference>
<dbReference type="NCBIfam" id="TIGR01171">
    <property type="entry name" value="rplB_bact"/>
    <property type="match status" value="1"/>
</dbReference>
<dbReference type="PANTHER" id="PTHR13691:SF5">
    <property type="entry name" value="LARGE RIBOSOMAL SUBUNIT PROTEIN UL2M"/>
    <property type="match status" value="1"/>
</dbReference>
<dbReference type="PANTHER" id="PTHR13691">
    <property type="entry name" value="RIBOSOMAL PROTEIN L2"/>
    <property type="match status" value="1"/>
</dbReference>
<dbReference type="Pfam" id="PF00181">
    <property type="entry name" value="Ribosomal_L2"/>
    <property type="match status" value="1"/>
</dbReference>
<dbReference type="Pfam" id="PF03947">
    <property type="entry name" value="Ribosomal_L2_C"/>
    <property type="match status" value="1"/>
</dbReference>
<dbReference type="PIRSF" id="PIRSF002158">
    <property type="entry name" value="Ribosomal_L2"/>
    <property type="match status" value="1"/>
</dbReference>
<dbReference type="SMART" id="SM01383">
    <property type="entry name" value="Ribosomal_L2"/>
    <property type="match status" value="1"/>
</dbReference>
<dbReference type="SMART" id="SM01382">
    <property type="entry name" value="Ribosomal_L2_C"/>
    <property type="match status" value="1"/>
</dbReference>
<dbReference type="SUPFAM" id="SSF50249">
    <property type="entry name" value="Nucleic acid-binding proteins"/>
    <property type="match status" value="1"/>
</dbReference>
<dbReference type="SUPFAM" id="SSF50104">
    <property type="entry name" value="Translation proteins SH3-like domain"/>
    <property type="match status" value="1"/>
</dbReference>
<dbReference type="PROSITE" id="PS00467">
    <property type="entry name" value="RIBOSOMAL_L2"/>
    <property type="match status" value="1"/>
</dbReference>
<comment type="function">
    <text evidence="1">One of the primary rRNA binding proteins. Required for association of the 30S and 50S subunits to form the 70S ribosome, for tRNA binding and peptide bond formation. It has been suggested to have peptidyltransferase activity; this is somewhat controversial. Makes several contacts with the 16S rRNA in the 70S ribosome.</text>
</comment>
<comment type="subunit">
    <text evidence="1">Part of the 50S ribosomal subunit. Forms a bridge to the 30S subunit in the 70S ribosome.</text>
</comment>
<comment type="similarity">
    <text evidence="1">Belongs to the universal ribosomal protein uL2 family.</text>
</comment>
<sequence length="278" mass="30182">MALKTFKPVTPSLRQLVLVDRRELYKGKPVKALTEGKSSSGGRNNLGRITVRFRGGGHKRVLRNVDFKRRDQLGVAATVERIEYDPNRTAFIALINFPDGKQSYILAPQRLQPGDKVVAGESVDIKPGNAGPVGSMPVGTIVHNVELKIGKGGAIARSAGNYAQIVGRDQGYVTLRLNSGEQRLVHGQCFASVGAVSNPDHMNISLGKAGRNRWLGKRPHNRGVAMNPVDHPHGGGEGRTSGGRNPVTPWGVPTKGKKTRSNKRTDVFILSSRHNRKK</sequence>
<evidence type="ECO:0000255" key="1">
    <source>
        <dbReference type="HAMAP-Rule" id="MF_01320"/>
    </source>
</evidence>
<evidence type="ECO:0000256" key="2">
    <source>
        <dbReference type="SAM" id="MobiDB-lite"/>
    </source>
</evidence>
<evidence type="ECO:0000305" key="3"/>